<proteinExistence type="evidence at transcript level"/>
<keyword id="KW-0217">Developmental protein</keyword>
<keyword id="KW-1185">Reference proteome</keyword>
<keyword id="KW-0964">Secreted</keyword>
<keyword id="KW-0732">Signal</keyword>
<keyword id="KW-0346">Stress response</keyword>
<comment type="function">
    <text evidence="2 3">Signaling peptide involved in the regulation of lateral organs separation, including fruits and leaves (PubMed:26071531). Involved in the perception of and response to light stress via the control of sinapoyl-malate accumulation, a UV-B protecting compound (PubMed:26967827).</text>
</comment>
<comment type="activity regulation">
    <text evidence="3">Counteracted by the antibiotic cefotaxime during responses to light stress.</text>
</comment>
<comment type="subcellular location">
    <subcellularLocation>
        <location evidence="2">Secreted</location>
    </subcellularLocation>
</comment>
<comment type="tissue specificity">
    <text evidence="2">Expressed in shoot apical meristems (SAM); mostly specific to the L1 layer in the center of the meristem but also detected in the L2 layer in organ primordia. Also observed in the vasculature of seedling roots.</text>
</comment>
<comment type="developmental stage">
    <text evidence="2">Observed in seedlings shoot apical meristem (SAM). Later present in the entire inflorescence meristem, and accumulates strongly in organ primordia. In flowers, expressed in the anthers and in the nectaries. Present in the paraclade junctions between the primary stem and axillary stems, especially at the base of the cauline leaf and the emerging axillary shoot.</text>
</comment>
<comment type="disruption phenotype">
    <text evidence="2 3">No visible phenotype.</text>
</comment>
<feature type="signal peptide" evidence="1">
    <location>
        <begin position="1"/>
        <end position="29"/>
    </location>
</feature>
<feature type="chain" id="PRO_0000446131" description="Signaling peptide TAXIMIN 1">
    <location>
        <begin position="30"/>
        <end position="75"/>
    </location>
</feature>
<evidence type="ECO:0000255" key="1"/>
<evidence type="ECO:0000269" key="2">
    <source>
    </source>
</evidence>
<evidence type="ECO:0000269" key="3">
    <source>
    </source>
</evidence>
<evidence type="ECO:0000303" key="4">
    <source>
    </source>
</evidence>
<evidence type="ECO:0000312" key="5">
    <source>
        <dbReference type="Araport" id="AT2G31090"/>
    </source>
</evidence>
<evidence type="ECO:0000312" key="6">
    <source>
        <dbReference type="EMBL" id="AAC63841.2"/>
    </source>
</evidence>
<name>TAX1_ARATH</name>
<organism>
    <name type="scientific">Arabidopsis thaliana</name>
    <name type="common">Mouse-ear cress</name>
    <dbReference type="NCBI Taxonomy" id="3702"/>
    <lineage>
        <taxon>Eukaryota</taxon>
        <taxon>Viridiplantae</taxon>
        <taxon>Streptophyta</taxon>
        <taxon>Embryophyta</taxon>
        <taxon>Tracheophyta</taxon>
        <taxon>Spermatophyta</taxon>
        <taxon>Magnoliopsida</taxon>
        <taxon>eudicotyledons</taxon>
        <taxon>Gunneridae</taxon>
        <taxon>Pentapetalae</taxon>
        <taxon>rosids</taxon>
        <taxon>malvids</taxon>
        <taxon>Brassicales</taxon>
        <taxon>Brassicaceae</taxon>
        <taxon>Camelineae</taxon>
        <taxon>Arabidopsis</taxon>
    </lineage>
</organism>
<accession>O82275</accession>
<reference key="1">
    <citation type="journal article" date="1999" name="Nature">
        <title>Sequence and analysis of chromosome 2 of the plant Arabidopsis thaliana.</title>
        <authorList>
            <person name="Lin X."/>
            <person name="Kaul S."/>
            <person name="Rounsley S.D."/>
            <person name="Shea T.P."/>
            <person name="Benito M.-I."/>
            <person name="Town C.D."/>
            <person name="Fujii C.Y."/>
            <person name="Mason T.M."/>
            <person name="Bowman C.L."/>
            <person name="Barnstead M.E."/>
            <person name="Feldblyum T.V."/>
            <person name="Buell C.R."/>
            <person name="Ketchum K.A."/>
            <person name="Lee J.J."/>
            <person name="Ronning C.M."/>
            <person name="Koo H.L."/>
            <person name="Moffat K.S."/>
            <person name="Cronin L.A."/>
            <person name="Shen M."/>
            <person name="Pai G."/>
            <person name="Van Aken S."/>
            <person name="Umayam L."/>
            <person name="Tallon L.J."/>
            <person name="Gill J.E."/>
            <person name="Adams M.D."/>
            <person name="Carrera A.J."/>
            <person name="Creasy T.H."/>
            <person name="Goodman H.M."/>
            <person name="Somerville C.R."/>
            <person name="Copenhaver G.P."/>
            <person name="Preuss D."/>
            <person name="Nierman W.C."/>
            <person name="White O."/>
            <person name="Eisen J.A."/>
            <person name="Salzberg S.L."/>
            <person name="Fraser C.M."/>
            <person name="Venter J.C."/>
        </authorList>
    </citation>
    <scope>NUCLEOTIDE SEQUENCE [LARGE SCALE GENOMIC DNA]</scope>
    <source>
        <strain>cv. Columbia</strain>
    </source>
</reference>
<reference key="2">
    <citation type="journal article" date="2017" name="Plant J.">
        <title>Araport11: a complete reannotation of the Arabidopsis thaliana reference genome.</title>
        <authorList>
            <person name="Cheng C.Y."/>
            <person name="Krishnakumar V."/>
            <person name="Chan A.P."/>
            <person name="Thibaud-Nissen F."/>
            <person name="Schobel S."/>
            <person name="Town C.D."/>
        </authorList>
    </citation>
    <scope>GENOME REANNOTATION</scope>
    <source>
        <strain>cv. Columbia</strain>
    </source>
</reference>
<reference key="3">
    <citation type="submission" date="2004-09" db="EMBL/GenBank/DDBJ databases">
        <title>Large-scale analysis of RIKEN Arabidopsis full-length (RAFL) cDNAs.</title>
        <authorList>
            <person name="Totoki Y."/>
            <person name="Seki M."/>
            <person name="Ishida J."/>
            <person name="Nakajima M."/>
            <person name="Enju A."/>
            <person name="Kamiya A."/>
            <person name="Narusaka M."/>
            <person name="Shin-i T."/>
            <person name="Nakagawa M."/>
            <person name="Sakamoto N."/>
            <person name="Oishi K."/>
            <person name="Kohara Y."/>
            <person name="Kobayashi M."/>
            <person name="Toyoda A."/>
            <person name="Sakaki Y."/>
            <person name="Sakurai T."/>
            <person name="Iida K."/>
            <person name="Akiyama K."/>
            <person name="Satou M."/>
            <person name="Toyoda T."/>
            <person name="Konagaya A."/>
            <person name="Carninci P."/>
            <person name="Kawai J."/>
            <person name="Hayashizaki Y."/>
            <person name="Shinozaki K."/>
        </authorList>
    </citation>
    <scope>NUCLEOTIDE SEQUENCE [LARGE SCALE MRNA]</scope>
    <source>
        <strain>cv. Columbia</strain>
    </source>
</reference>
<reference key="4">
    <citation type="submission" date="2006-05" db="EMBL/GenBank/DDBJ databases">
        <title>Arabidopsis ORF clones.</title>
        <authorList>
            <person name="Quinitio C."/>
            <person name="Chen H."/>
            <person name="Kim C.J."/>
            <person name="Shinn P."/>
            <person name="Ecker J.R."/>
        </authorList>
    </citation>
    <scope>NUCLEOTIDE SEQUENCE [LARGE SCALE MRNA]</scope>
    <source>
        <strain>cv. Columbia</strain>
    </source>
</reference>
<reference key="5">
    <citation type="submission" date="2002-03" db="EMBL/GenBank/DDBJ databases">
        <title>Full-length cDNA from Arabidopsis thaliana.</title>
        <authorList>
            <person name="Brover V.V."/>
            <person name="Troukhan M.E."/>
            <person name="Alexandrov N.A."/>
            <person name="Lu Y.-P."/>
            <person name="Flavell R.B."/>
            <person name="Feldmann K.A."/>
        </authorList>
    </citation>
    <scope>NUCLEOTIDE SEQUENCE [LARGE SCALE MRNA]</scope>
</reference>
<reference key="6">
    <citation type="journal article" date="2015" name="J. Exp. Bot.">
        <title>Overexpression of the Arabidopsis thaliana signalling peptide TAXIMIN1 affects lateral organ development.</title>
        <authorList>
            <person name="Colling J."/>
            <person name="Tohge T."/>
            <person name="De Clercq R."/>
            <person name="Brunoud G."/>
            <person name="Vernoux T."/>
            <person name="Fernie A.R."/>
            <person name="Makunga N.P."/>
            <person name="Goossens A."/>
            <person name="Pauwels L."/>
        </authorList>
    </citation>
    <scope>FUNCTION</scope>
    <scope>DISRUPTION PHENOTYPE</scope>
    <scope>TISSUE SPECIFICITY</scope>
    <scope>DEVELOPMENTAL STAGE</scope>
    <source>
        <strain>cv. Columbia</strain>
    </source>
</reference>
<reference key="7">
    <citation type="journal article" date="2016" name="Plant Signal. Behav.">
        <title>Hypersensitivity of Arabidopsis TAXIMIN1 overexpression lines to light stress is correlated with decreased sinapoyl malate abundance and countered by the antibiotic cefotaxime.</title>
        <authorList>
            <person name="Colling J."/>
            <person name="Pollier J."/>
            <person name="Vanden Bossche R."/>
            <person name="Makunga N.P."/>
            <person name="Pauwels L."/>
            <person name="Goossens A."/>
        </authorList>
    </citation>
    <scope>FUNCTION</scope>
    <scope>ACTIVITY REGULATION</scope>
    <scope>DISRUPTION PHENOTYPE</scope>
    <source>
        <strain>cv. Columbia</strain>
    </source>
</reference>
<protein>
    <recommendedName>
        <fullName evidence="4">Signaling peptide TAXIMIN 1</fullName>
    </recommendedName>
</protein>
<gene>
    <name evidence="4" type="primary">TAX1</name>
    <name evidence="5" type="ordered locus">At2g31090</name>
    <name evidence="6" type="ORF">T16B12.10</name>
</gene>
<dbReference type="EMBL" id="AC005311">
    <property type="protein sequence ID" value="AAC63841.2"/>
    <property type="molecule type" value="Genomic_DNA"/>
</dbReference>
<dbReference type="EMBL" id="CP002685">
    <property type="protein sequence ID" value="AEC08492.1"/>
    <property type="molecule type" value="Genomic_DNA"/>
</dbReference>
<dbReference type="EMBL" id="AK175340">
    <property type="protein sequence ID" value="BAD43103.1"/>
    <property type="molecule type" value="mRNA"/>
</dbReference>
<dbReference type="EMBL" id="BT025565">
    <property type="protein sequence ID" value="ABF58983.1"/>
    <property type="molecule type" value="mRNA"/>
</dbReference>
<dbReference type="EMBL" id="AY084503">
    <property type="protein sequence ID" value="AAM61072.1"/>
    <property type="molecule type" value="mRNA"/>
</dbReference>
<dbReference type="PIR" id="D84716">
    <property type="entry name" value="D84716"/>
</dbReference>
<dbReference type="RefSeq" id="NP_565714.1">
    <property type="nucleotide sequence ID" value="NM_128665.2"/>
</dbReference>
<dbReference type="SMR" id="O82275"/>
<dbReference type="FunCoup" id="O82275">
    <property type="interactions" value="891"/>
</dbReference>
<dbReference type="IntAct" id="O82275">
    <property type="interactions" value="3"/>
</dbReference>
<dbReference type="STRING" id="3702.O82275"/>
<dbReference type="PaxDb" id="3702-AT2G31090.1"/>
<dbReference type="EnsemblPlants" id="AT2G31090.1">
    <property type="protein sequence ID" value="AT2G31090.1"/>
    <property type="gene ID" value="AT2G31090"/>
</dbReference>
<dbReference type="GeneID" id="817665"/>
<dbReference type="Gramene" id="AT2G31090.1">
    <property type="protein sequence ID" value="AT2G31090.1"/>
    <property type="gene ID" value="AT2G31090"/>
</dbReference>
<dbReference type="KEGG" id="ath:AT2G31090"/>
<dbReference type="Araport" id="AT2G31090"/>
<dbReference type="TAIR" id="AT2G31090">
    <property type="gene designation" value="TAX1"/>
</dbReference>
<dbReference type="eggNOG" id="ENOG502S4K3">
    <property type="taxonomic scope" value="Eukaryota"/>
</dbReference>
<dbReference type="HOGENOM" id="CLU_180321_0_0_1"/>
<dbReference type="InParanoid" id="O82275"/>
<dbReference type="OMA" id="MCCDGDC"/>
<dbReference type="PRO" id="PR:O82275"/>
<dbReference type="Proteomes" id="UP000006548">
    <property type="component" value="Chromosome 2"/>
</dbReference>
<dbReference type="ExpressionAtlas" id="O82275">
    <property type="expression patterns" value="baseline and differential"/>
</dbReference>
<dbReference type="GO" id="GO:0005615">
    <property type="term" value="C:extracellular space"/>
    <property type="evidence" value="ECO:0000314"/>
    <property type="project" value="UniProtKB"/>
</dbReference>
<dbReference type="GO" id="GO:0005886">
    <property type="term" value="C:plasma membrane"/>
    <property type="evidence" value="ECO:0000314"/>
    <property type="project" value="TAIR"/>
</dbReference>
<dbReference type="GO" id="GO:0048530">
    <property type="term" value="P:fruit morphogenesis"/>
    <property type="evidence" value="ECO:0000315"/>
    <property type="project" value="TAIR"/>
</dbReference>
<dbReference type="GO" id="GO:0010199">
    <property type="term" value="P:organ boundary specification between lateral organs and the meristem"/>
    <property type="evidence" value="ECO:0000315"/>
    <property type="project" value="TAIR"/>
</dbReference>
<dbReference type="GO" id="GO:0009416">
    <property type="term" value="P:response to light stimulus"/>
    <property type="evidence" value="ECO:0000315"/>
    <property type="project" value="UniProtKB"/>
</dbReference>
<dbReference type="InterPro" id="IPR055283">
    <property type="entry name" value="TAXIMIN_1/2"/>
</dbReference>
<dbReference type="PANTHER" id="PTHR33834:SF2">
    <property type="entry name" value="SIGNALING PEPTIDE TAXIMIN 1"/>
    <property type="match status" value="1"/>
</dbReference>
<dbReference type="PANTHER" id="PTHR33834">
    <property type="entry name" value="SIGNALING PEPTIDE TAXIMIN 2"/>
    <property type="match status" value="1"/>
</dbReference>
<sequence length="75" mass="8150">MCDGDCRPLGFLLGLPFAFLSLLLSIIGVIIWIVGLLLSCICPCCLCVTVLVEIAIGLIKAPIHVMEWFMSKIPC</sequence>